<keyword id="KW-0297">G-protein coupled receptor</keyword>
<keyword id="KW-0325">Glycoprotein</keyword>
<keyword id="KW-0472">Membrane</keyword>
<keyword id="KW-0675">Receptor</keyword>
<keyword id="KW-1185">Reference proteome</keyword>
<keyword id="KW-0716">Sensory transduction</keyword>
<keyword id="KW-0919">Taste</keyword>
<keyword id="KW-0807">Transducer</keyword>
<keyword id="KW-0812">Transmembrane</keyword>
<keyword id="KW-1133">Transmembrane helix</keyword>
<name>T2R64_PANPA</name>
<comment type="function">
    <text evidence="1">Receptor that may play a role in the perception of bitterness and is gustducin-linked. May play a role in sensing the chemical composition of the gastrointestinal content. The activity of this receptor may stimulate alpha gustducin, mediate PLC-beta-2 activation and lead to the gating of TRPM5 (By similarity).</text>
</comment>
<comment type="subcellular location">
    <subcellularLocation>
        <location>Membrane</location>
        <topology>Multi-pass membrane protein</topology>
    </subcellularLocation>
</comment>
<comment type="miscellaneous">
    <text>Most taste cells may be activated by a limited number of bitter compounds; individual taste cells can discriminate among bitter stimuli.</text>
</comment>
<comment type="miscellaneous">
    <text>The human and chimpanzee orthologous proteins do not exist, their genes are pseudogenes.</text>
</comment>
<comment type="similarity">
    <text evidence="3">Belongs to the G-protein coupled receptor T2R family.</text>
</comment>
<organism>
    <name type="scientific">Pan paniscus</name>
    <name type="common">Pygmy chimpanzee</name>
    <name type="synonym">Bonobo</name>
    <dbReference type="NCBI Taxonomy" id="9597"/>
    <lineage>
        <taxon>Eukaryota</taxon>
        <taxon>Metazoa</taxon>
        <taxon>Chordata</taxon>
        <taxon>Craniata</taxon>
        <taxon>Vertebrata</taxon>
        <taxon>Euteleostomi</taxon>
        <taxon>Mammalia</taxon>
        <taxon>Eutheria</taxon>
        <taxon>Euarchontoglires</taxon>
        <taxon>Primates</taxon>
        <taxon>Haplorrhini</taxon>
        <taxon>Catarrhini</taxon>
        <taxon>Hominidae</taxon>
        <taxon>Pan</taxon>
    </lineage>
</organism>
<accession>Q5Y4Y9</accession>
<dbReference type="EMBL" id="AY677159">
    <property type="protein sequence ID" value="AAV28586.1"/>
    <property type="molecule type" value="Genomic_DNA"/>
</dbReference>
<dbReference type="SMR" id="Q5Y4Y9"/>
<dbReference type="GlyCosmos" id="Q5Y4Y9">
    <property type="glycosylation" value="1 site, No reported glycans"/>
</dbReference>
<dbReference type="Proteomes" id="UP000240080">
    <property type="component" value="Unplaced"/>
</dbReference>
<dbReference type="GO" id="GO:0005886">
    <property type="term" value="C:plasma membrane"/>
    <property type="evidence" value="ECO:0007669"/>
    <property type="project" value="UniProtKB-ARBA"/>
</dbReference>
<dbReference type="GO" id="GO:0033038">
    <property type="term" value="F:bitter taste receptor activity"/>
    <property type="evidence" value="ECO:0007669"/>
    <property type="project" value="InterPro"/>
</dbReference>
<dbReference type="GO" id="GO:0004930">
    <property type="term" value="F:G protein-coupled receptor activity"/>
    <property type="evidence" value="ECO:0007669"/>
    <property type="project" value="UniProtKB-KW"/>
</dbReference>
<dbReference type="CDD" id="cd15027">
    <property type="entry name" value="7tm_TAS2R43-like"/>
    <property type="match status" value="1"/>
</dbReference>
<dbReference type="FunFam" id="1.20.1070.10:FF:000042">
    <property type="entry name" value="Taste receptor type 2 member 7"/>
    <property type="match status" value="1"/>
</dbReference>
<dbReference type="Gene3D" id="1.20.1070.10">
    <property type="entry name" value="Rhodopsin 7-helix transmembrane proteins"/>
    <property type="match status" value="1"/>
</dbReference>
<dbReference type="InterPro" id="IPR007960">
    <property type="entry name" value="TAS2R"/>
</dbReference>
<dbReference type="PANTHER" id="PTHR11394">
    <property type="entry name" value="TASTE RECEPTOR TYPE 2"/>
    <property type="match status" value="1"/>
</dbReference>
<dbReference type="PANTHER" id="PTHR11394:SF139">
    <property type="entry name" value="TASTE RECEPTOR TYPE 2 MEMBER 19-RELATED"/>
    <property type="match status" value="1"/>
</dbReference>
<dbReference type="Pfam" id="PF05296">
    <property type="entry name" value="TAS2R"/>
    <property type="match status" value="1"/>
</dbReference>
<dbReference type="SUPFAM" id="SSF81321">
    <property type="entry name" value="Family A G protein-coupled receptor-like"/>
    <property type="match status" value="1"/>
</dbReference>
<feature type="chain" id="PRO_0000082357" description="Taste receptor type 2 member 64">
    <location>
        <begin position="1"/>
        <end position="309"/>
    </location>
</feature>
<feature type="topological domain" description="Extracellular" evidence="2">
    <location>
        <begin position="1"/>
        <end position="3"/>
    </location>
</feature>
<feature type="transmembrane region" description="Helical; Name=1" evidence="2">
    <location>
        <begin position="4"/>
        <end position="26"/>
    </location>
</feature>
<feature type="topological domain" description="Cytoplasmic" evidence="2">
    <location>
        <begin position="27"/>
        <end position="46"/>
    </location>
</feature>
<feature type="transmembrane region" description="Helical; Name=2" evidence="2">
    <location>
        <begin position="47"/>
        <end position="69"/>
    </location>
</feature>
<feature type="topological domain" description="Extracellular" evidence="2">
    <location>
        <begin position="70"/>
        <end position="83"/>
    </location>
</feature>
<feature type="transmembrane region" description="Helical; Name=3" evidence="2">
    <location>
        <begin position="84"/>
        <end position="106"/>
    </location>
</feature>
<feature type="topological domain" description="Cytoplasmic" evidence="2">
    <location>
        <begin position="107"/>
        <end position="126"/>
    </location>
</feature>
<feature type="transmembrane region" description="Helical; Name=4" evidence="2">
    <location>
        <begin position="127"/>
        <end position="149"/>
    </location>
</feature>
<feature type="topological domain" description="Extracellular" evidence="2">
    <location>
        <begin position="150"/>
        <end position="176"/>
    </location>
</feature>
<feature type="transmembrane region" description="Helical; Name=5" evidence="2">
    <location>
        <begin position="177"/>
        <end position="199"/>
    </location>
</feature>
<feature type="topological domain" description="Cytoplasmic" evidence="2">
    <location>
        <begin position="200"/>
        <end position="230"/>
    </location>
</feature>
<feature type="transmembrane region" description="Helical; Name=6" evidence="2">
    <location>
        <begin position="231"/>
        <end position="253"/>
    </location>
</feature>
<feature type="topological domain" description="Extracellular" evidence="2">
    <location>
        <begin position="254"/>
        <end position="258"/>
    </location>
</feature>
<feature type="transmembrane region" description="Helical; Name=7" evidence="2">
    <location>
        <begin position="259"/>
        <end position="281"/>
    </location>
</feature>
<feature type="topological domain" description="Cytoplasmic" evidence="2">
    <location>
        <begin position="282"/>
        <end position="309"/>
    </location>
</feature>
<feature type="glycosylation site" description="N-linked (GlcNAc...) asparagine" evidence="2">
    <location>
        <position position="161"/>
    </location>
</feature>
<proteinExistence type="inferred from homology"/>
<gene>
    <name type="primary">TAS2R64</name>
</gene>
<reference key="1">
    <citation type="journal article" date="2004" name="Proc. Natl. Acad. Sci. U.S.A.">
        <title>Divergence of T2R chemosensory receptor families in humans, bonobos, and chimpanzees.</title>
        <authorList>
            <person name="Parry C.M."/>
            <person name="Erkner A."/>
            <person name="le Coutre J."/>
        </authorList>
    </citation>
    <scope>NUCLEOTIDE SEQUENCE [GENOMIC DNA]</scope>
</reference>
<protein>
    <recommendedName>
        <fullName>Taste receptor type 2 member 64</fullName>
        <shortName>T2R64</shortName>
    </recommendedName>
</protein>
<sequence>MVYFLLIILSILVVFAFVLGNFSNGFVALVNVIDWVKTRKISSADQILTALVVSRIGLLWVILFHWYANVFNSALYSSEVGAVASNISAIINHFSIWLAASLGIFYLLKIANFSNLIFLHLKKRIRSVVLVILLGPLVFLICNLAVITMDERVWTKEYEGNVTWKIKLRNAIHLSDLTVSTLANLIPFILTLICFLLLICSLHKHLKKMQLHGKGSQDLSTKVHIKALQTVISFLMLYAIYFLYLITLTWNLWTQQNKLVFLLCQTLGIMYPSFHSFFLIMGSRKLKQTFLSVLCQVTCLVKGQQPSTP</sequence>
<evidence type="ECO:0000250" key="1"/>
<evidence type="ECO:0000255" key="2"/>
<evidence type="ECO:0000305" key="3"/>